<sequence length="367" mass="39076">MNIKGKALLAGCIALAFSNMALAEDIKVAVVGAMSGPVAQYGDQEFTGAEQAVADINAKGGIKGNKLQIVKYDDACDPKQAVAVANKVVNDGIKYVIGHLCSSSTQPASDIYEDEGILMITPAATAPELTARGYQLILRTTGLDSDQGPTAAKYILEKVKPQRIAIVHDKQQYGEGLARAVQDGLKKGNANVVFFDGITAGEKDFSTLVARLKKENIDFVYYGGYHPEMGQILRQARAAGLKTQFMGPEGVANVSLSNIAGESAEGLLVTKPKNYDQVPANKPIVDAIKAKKQDPSGAFVWTTYAALQSLQAGLNQSDDPAEIAKYLKANSVDTVMGPLTWDEKGDLKGFEFGVFDWHANGTATDAK</sequence>
<name>LIVJ_ECOL6</name>
<organism>
    <name type="scientific">Escherichia coli O6:H1 (strain CFT073 / ATCC 700928 / UPEC)</name>
    <dbReference type="NCBI Taxonomy" id="199310"/>
    <lineage>
        <taxon>Bacteria</taxon>
        <taxon>Pseudomonadati</taxon>
        <taxon>Pseudomonadota</taxon>
        <taxon>Gammaproteobacteria</taxon>
        <taxon>Enterobacterales</taxon>
        <taxon>Enterobacteriaceae</taxon>
        <taxon>Escherichia</taxon>
    </lineage>
</organism>
<gene>
    <name type="primary">livJ</name>
    <name type="ordered locus">c4253</name>
</gene>
<accession>P0AD97</accession>
<accession>P02917</accession>
<accession>P76698</accession>
<accession>Q8CVL7</accession>
<accession>Q8X6S2</accession>
<dbReference type="EMBL" id="AE014075">
    <property type="protein sequence ID" value="AAN82689.1"/>
    <property type="status" value="ALT_INIT"/>
    <property type="molecule type" value="Genomic_DNA"/>
</dbReference>
<dbReference type="RefSeq" id="WP_001021996.1">
    <property type="nucleotide sequence ID" value="NZ_CP051263.1"/>
</dbReference>
<dbReference type="SMR" id="P0AD97"/>
<dbReference type="STRING" id="199310.c4253"/>
<dbReference type="GeneID" id="93778531"/>
<dbReference type="KEGG" id="ecc:c4253"/>
<dbReference type="eggNOG" id="COG0683">
    <property type="taxonomic scope" value="Bacteria"/>
</dbReference>
<dbReference type="HOGENOM" id="CLU_027128_6_0_6"/>
<dbReference type="Proteomes" id="UP000001410">
    <property type="component" value="Chromosome"/>
</dbReference>
<dbReference type="GO" id="GO:0042597">
    <property type="term" value="C:periplasmic space"/>
    <property type="evidence" value="ECO:0007669"/>
    <property type="project" value="UniProtKB-SubCell"/>
</dbReference>
<dbReference type="GO" id="GO:0006865">
    <property type="term" value="P:amino acid transport"/>
    <property type="evidence" value="ECO:0007669"/>
    <property type="project" value="UniProtKB-KW"/>
</dbReference>
<dbReference type="CDD" id="cd06342">
    <property type="entry name" value="PBP1_ABC_LIVBP-like"/>
    <property type="match status" value="1"/>
</dbReference>
<dbReference type="FunFam" id="3.40.50.2300:FF:000033">
    <property type="entry name" value="Amino acid ABC transporter substrate-binding protein"/>
    <property type="match status" value="1"/>
</dbReference>
<dbReference type="Gene3D" id="3.40.50.2300">
    <property type="match status" value="2"/>
</dbReference>
<dbReference type="InterPro" id="IPR028081">
    <property type="entry name" value="Leu-bd"/>
</dbReference>
<dbReference type="InterPro" id="IPR000709">
    <property type="entry name" value="Leu_Ile_Val-bd"/>
</dbReference>
<dbReference type="InterPro" id="IPR028082">
    <property type="entry name" value="Peripla_BP_I"/>
</dbReference>
<dbReference type="NCBIfam" id="NF011933">
    <property type="entry name" value="PRK15404.1"/>
    <property type="match status" value="1"/>
</dbReference>
<dbReference type="PANTHER" id="PTHR47151">
    <property type="entry name" value="LEU/ILE/VAL-BINDING ABC TRANSPORTER SUBUNIT"/>
    <property type="match status" value="1"/>
</dbReference>
<dbReference type="PANTHER" id="PTHR47151:SF1">
    <property type="entry name" value="LEU_ILE_VAL-BINDING PROTEIN"/>
    <property type="match status" value="1"/>
</dbReference>
<dbReference type="Pfam" id="PF13458">
    <property type="entry name" value="Peripla_BP_6"/>
    <property type="match status" value="1"/>
</dbReference>
<dbReference type="PRINTS" id="PR00337">
    <property type="entry name" value="LEUILEVALBP"/>
</dbReference>
<dbReference type="SUPFAM" id="SSF53822">
    <property type="entry name" value="Periplasmic binding protein-like I"/>
    <property type="match status" value="1"/>
</dbReference>
<keyword id="KW-0029">Amino-acid transport</keyword>
<keyword id="KW-1015">Disulfide bond</keyword>
<keyword id="KW-0574">Periplasm</keyword>
<keyword id="KW-1185">Reference proteome</keyword>
<keyword id="KW-0732">Signal</keyword>
<keyword id="KW-0813">Transport</keyword>
<evidence type="ECO:0000250" key="1"/>
<evidence type="ECO:0000255" key="2"/>
<evidence type="ECO:0000305" key="3"/>
<reference key="1">
    <citation type="journal article" date="2002" name="Proc. Natl. Acad. Sci. U.S.A.">
        <title>Extensive mosaic structure revealed by the complete genome sequence of uropathogenic Escherichia coli.</title>
        <authorList>
            <person name="Welch R.A."/>
            <person name="Burland V."/>
            <person name="Plunkett G. III"/>
            <person name="Redford P."/>
            <person name="Roesch P."/>
            <person name="Rasko D."/>
            <person name="Buckles E.L."/>
            <person name="Liou S.-R."/>
            <person name="Boutin A."/>
            <person name="Hackett J."/>
            <person name="Stroud D."/>
            <person name="Mayhew G.F."/>
            <person name="Rose D.J."/>
            <person name="Zhou S."/>
            <person name="Schwartz D.C."/>
            <person name="Perna N.T."/>
            <person name="Mobley H.L.T."/>
            <person name="Donnenberg M.S."/>
            <person name="Blattner F.R."/>
        </authorList>
    </citation>
    <scope>NUCLEOTIDE SEQUENCE [LARGE SCALE GENOMIC DNA]</scope>
    <source>
        <strain>CFT073 / ATCC 700928 / UPEC</strain>
    </source>
</reference>
<proteinExistence type="inferred from homology"/>
<comment type="function">
    <text evidence="1">This protein is a component of the leucine, isoleucine, valine, (threonine) transport system, which is one of the two periplasmic binding protein-dependent transport systems of the high-affinity transport of the branched-chain amino acids.</text>
</comment>
<comment type="subcellular location">
    <subcellularLocation>
        <location evidence="1">Periplasm</location>
    </subcellularLocation>
</comment>
<comment type="similarity">
    <text evidence="3">Belongs to the leucine-binding protein family.</text>
</comment>
<comment type="sequence caution" evidence="3">
    <conflict type="erroneous initiation">
        <sequence resource="EMBL-CDS" id="AAN82689"/>
    </conflict>
</comment>
<protein>
    <recommendedName>
        <fullName>Leu/Ile/Val-binding protein</fullName>
        <shortName>LIV-BP</shortName>
    </recommendedName>
</protein>
<feature type="signal peptide" evidence="2">
    <location>
        <begin position="1"/>
        <end position="23"/>
    </location>
</feature>
<feature type="chain" id="PRO_0000043182" description="Leu/Ile/Val-binding protein">
    <location>
        <begin position="24"/>
        <end position="367"/>
    </location>
</feature>
<feature type="disulfide bond" evidence="1">
    <location>
        <begin position="76"/>
        <end position="101"/>
    </location>
</feature>